<dbReference type="EC" id="3.1.4.-" evidence="2"/>
<dbReference type="EC" id="3.1.13.4" evidence="2"/>
<dbReference type="EMBL" id="BC123772">
    <property type="protein sequence ID" value="AAI23773.1"/>
    <property type="molecule type" value="mRNA"/>
</dbReference>
<dbReference type="RefSeq" id="NP_001069601.1">
    <property type="nucleotide sequence ID" value="NM_001076133.1"/>
</dbReference>
<dbReference type="SMR" id="Q08DF7"/>
<dbReference type="FunCoup" id="Q08DF7">
    <property type="interactions" value="3408"/>
</dbReference>
<dbReference type="STRING" id="9913.ENSBTAP00000020675"/>
<dbReference type="PaxDb" id="9913-ENSBTAP00000020675"/>
<dbReference type="Ensembl" id="ENSBTAT00000020675.4">
    <property type="protein sequence ID" value="ENSBTAP00000020675.3"/>
    <property type="gene ID" value="ENSBTAG00000015563.4"/>
</dbReference>
<dbReference type="GeneID" id="538860"/>
<dbReference type="KEGG" id="bta:538860"/>
<dbReference type="CTD" id="201626"/>
<dbReference type="VEuPathDB" id="HostDB:ENSBTAG00000015563"/>
<dbReference type="VGNC" id="VGNC:32670">
    <property type="gene designation" value="PDE12"/>
</dbReference>
<dbReference type="eggNOG" id="KOG0620">
    <property type="taxonomic scope" value="Eukaryota"/>
</dbReference>
<dbReference type="GeneTree" id="ENSGT00940000157205"/>
<dbReference type="HOGENOM" id="CLU_016428_7_2_1"/>
<dbReference type="InParanoid" id="Q08DF7"/>
<dbReference type="OMA" id="FRLKSAC"/>
<dbReference type="OrthoDB" id="412787at2759"/>
<dbReference type="TreeFam" id="TF323175"/>
<dbReference type="Reactome" id="R-BTA-8983711">
    <property type="pathway name" value="OAS antiviral response"/>
</dbReference>
<dbReference type="Proteomes" id="UP000009136">
    <property type="component" value="Chromosome 22"/>
</dbReference>
<dbReference type="GO" id="GO:0005759">
    <property type="term" value="C:mitochondrial matrix"/>
    <property type="evidence" value="ECO:0007669"/>
    <property type="project" value="UniProtKB-SubCell"/>
</dbReference>
<dbReference type="GO" id="GO:0005739">
    <property type="term" value="C:mitochondrion"/>
    <property type="evidence" value="ECO:0000318"/>
    <property type="project" value="GO_Central"/>
</dbReference>
<dbReference type="GO" id="GO:0000175">
    <property type="term" value="F:3'-5'-RNA exonuclease activity"/>
    <property type="evidence" value="ECO:0000318"/>
    <property type="project" value="GO_Central"/>
</dbReference>
<dbReference type="GO" id="GO:0046872">
    <property type="term" value="F:metal ion binding"/>
    <property type="evidence" value="ECO:0007669"/>
    <property type="project" value="UniProtKB-KW"/>
</dbReference>
<dbReference type="GO" id="GO:0004535">
    <property type="term" value="F:poly(A)-specific ribonuclease activity"/>
    <property type="evidence" value="ECO:0000315"/>
    <property type="project" value="UniProtKB"/>
</dbReference>
<dbReference type="GO" id="GO:0140374">
    <property type="term" value="P:antiviral innate immune response"/>
    <property type="evidence" value="ECO:0007669"/>
    <property type="project" value="Ensembl"/>
</dbReference>
<dbReference type="GO" id="GO:0071359">
    <property type="term" value="P:cellular response to dsRNA"/>
    <property type="evidence" value="ECO:0007669"/>
    <property type="project" value="Ensembl"/>
</dbReference>
<dbReference type="GO" id="GO:0035457">
    <property type="term" value="P:cellular response to interferon-alpha"/>
    <property type="evidence" value="ECO:0007669"/>
    <property type="project" value="Ensembl"/>
</dbReference>
<dbReference type="GO" id="GO:0071346">
    <property type="term" value="P:cellular response to type II interferon"/>
    <property type="evidence" value="ECO:0007669"/>
    <property type="project" value="Ensembl"/>
</dbReference>
<dbReference type="GO" id="GO:0000958">
    <property type="term" value="P:mitochondrial mRNA catabolic process"/>
    <property type="evidence" value="ECO:0007669"/>
    <property type="project" value="Ensembl"/>
</dbReference>
<dbReference type="GO" id="GO:0006397">
    <property type="term" value="P:mRNA processing"/>
    <property type="evidence" value="ECO:0007669"/>
    <property type="project" value="UniProtKB-KW"/>
</dbReference>
<dbReference type="GO" id="GO:0000288">
    <property type="term" value="P:nuclear-transcribed mRNA catabolic process, deadenylation-dependent decay"/>
    <property type="evidence" value="ECO:0000318"/>
    <property type="project" value="GO_Central"/>
</dbReference>
<dbReference type="GO" id="GO:0045070">
    <property type="term" value="P:positive regulation of viral genome replication"/>
    <property type="evidence" value="ECO:0007669"/>
    <property type="project" value="Ensembl"/>
</dbReference>
<dbReference type="GO" id="GO:0044528">
    <property type="term" value="P:regulation of mitochondrial mRNA stability"/>
    <property type="evidence" value="ECO:0007669"/>
    <property type="project" value="Ensembl"/>
</dbReference>
<dbReference type="FunFam" id="3.60.10.10:FF:000018">
    <property type="entry name" value="2',5'-phosphodiesterase 12"/>
    <property type="match status" value="1"/>
</dbReference>
<dbReference type="Gene3D" id="3.60.10.10">
    <property type="entry name" value="Endonuclease/exonuclease/phosphatase"/>
    <property type="match status" value="1"/>
</dbReference>
<dbReference type="InterPro" id="IPR050410">
    <property type="entry name" value="CCR4/nocturin_mRNA_transcr"/>
</dbReference>
<dbReference type="InterPro" id="IPR036691">
    <property type="entry name" value="Endo/exonu/phosph_ase_sf"/>
</dbReference>
<dbReference type="InterPro" id="IPR005135">
    <property type="entry name" value="Endo/exonuclease/phosphatase"/>
</dbReference>
<dbReference type="InterPro" id="IPR048821">
    <property type="entry name" value="PDE12-like_N"/>
</dbReference>
<dbReference type="PANTHER" id="PTHR12121:SF37">
    <property type="entry name" value="2',5'-PHOSPHODIESTERASE 12"/>
    <property type="match status" value="1"/>
</dbReference>
<dbReference type="PANTHER" id="PTHR12121">
    <property type="entry name" value="CARBON CATABOLITE REPRESSOR PROTEIN 4"/>
    <property type="match status" value="1"/>
</dbReference>
<dbReference type="Pfam" id="PF03372">
    <property type="entry name" value="Exo_endo_phos"/>
    <property type="match status" value="1"/>
</dbReference>
<dbReference type="Pfam" id="PF21171">
    <property type="entry name" value="PDE12-like_N"/>
    <property type="match status" value="1"/>
</dbReference>
<dbReference type="SUPFAM" id="SSF56219">
    <property type="entry name" value="DNase I-like"/>
    <property type="match status" value="1"/>
</dbReference>
<reference key="1">
    <citation type="submission" date="2006-09" db="EMBL/GenBank/DDBJ databases">
        <authorList>
            <consortium name="NIH - Mammalian Gene Collection (MGC) project"/>
        </authorList>
    </citation>
    <scope>NUCLEOTIDE SEQUENCE [LARGE SCALE MRNA]</scope>
    <source>
        <strain>Hereford</strain>
        <tissue>Hippocampus</tissue>
    </source>
</reference>
<reference key="2">
    <citation type="journal article" date="2004" name="J. Biol. Chem.">
        <title>Identification of 2'-phosphodiesterase, which plays a role in the 2-5A system regulated by interferon.</title>
        <authorList>
            <person name="Kubota K."/>
            <person name="Nakahara K."/>
            <person name="Ohtsuka T."/>
            <person name="Yoshida S."/>
            <person name="Kawaguchi J."/>
            <person name="Fujita Y."/>
            <person name="Ozeki Y."/>
            <person name="Hara A."/>
            <person name="Yoshimura C."/>
            <person name="Furukawa H."/>
            <person name="Haruyama H."/>
            <person name="Ichikawa K."/>
            <person name="Yamashita M."/>
            <person name="Matsuoka T."/>
            <person name="Iijima Y."/>
        </authorList>
    </citation>
    <scope>TISSUE SPECIFICITY</scope>
    <scope>IDENTIFICATION BY MASS SPECTROMETRY</scope>
</reference>
<comment type="function">
    <text evidence="2">Enzyme that cleaves 2',5'-phosphodiester bond linking adenosines of the 5'-triphosphorylated oligoadenylates, triphosphorylated oligoadenylates referred as 2-5A modulates the 2-5A system. Degrades triphosphorylated 2-5A to produce AMP and ATP. Also cleaves 3',5'-phosphodiester bond of oligoadenylates. Plays a role as a negative regulator of the 2-5A system that is one of the major pathways for antiviral and antitumor functions induced by interferons (IFNs). Suppression of this enzyme increases cellular 2-5A levels and decreases viral replication in cultured small-airway epithelial cells.</text>
</comment>
<comment type="catalytic activity">
    <reaction evidence="2">
        <text>Exonucleolytic cleavage of poly(A) to 5'-AMP.</text>
        <dbReference type="EC" id="3.1.13.4"/>
    </reaction>
</comment>
<comment type="cofactor">
    <cofactor evidence="2">
        <name>Mg(2+)</name>
        <dbReference type="ChEBI" id="CHEBI:18420"/>
    </cofactor>
</comment>
<comment type="subcellular location">
    <subcellularLocation>
        <location evidence="2">Mitochondrion matrix</location>
    </subcellularLocation>
</comment>
<comment type="tissue specificity">
    <text evidence="5">Liver.</text>
</comment>
<comment type="similarity">
    <text evidence="6">Belongs to the CCR4/nocturin family.</text>
</comment>
<protein>
    <recommendedName>
        <fullName>2',5'-phosphodiesterase 12</fullName>
        <shortName>2'-PDE</shortName>
        <shortName>2-PDE</shortName>
        <ecNumber evidence="2">3.1.4.-</ecNumber>
    </recommendedName>
    <alternativeName>
        <fullName>Mitochondrial deadenylase</fullName>
        <ecNumber evidence="2">3.1.13.4</ecNumber>
    </alternativeName>
</protein>
<organism>
    <name type="scientific">Bos taurus</name>
    <name type="common">Bovine</name>
    <dbReference type="NCBI Taxonomy" id="9913"/>
    <lineage>
        <taxon>Eukaryota</taxon>
        <taxon>Metazoa</taxon>
        <taxon>Chordata</taxon>
        <taxon>Craniata</taxon>
        <taxon>Vertebrata</taxon>
        <taxon>Euteleostomi</taxon>
        <taxon>Mammalia</taxon>
        <taxon>Eutheria</taxon>
        <taxon>Laurasiatheria</taxon>
        <taxon>Artiodactyla</taxon>
        <taxon>Ruminantia</taxon>
        <taxon>Pecora</taxon>
        <taxon>Bovidae</taxon>
        <taxon>Bovinae</taxon>
        <taxon>Bos</taxon>
    </lineage>
</organism>
<gene>
    <name type="primary">PDE12</name>
</gene>
<sequence>MWRLPGVRAALRGVRTAVERRSRTEAASETSVGAMERAVVRCVPSEPKLSLSFALADGSHKNMQRDQSEPLGRALSRIATNALKGHAKVAAAKKSRKNRPNAGSGVACAGPGPEPAAACEPVVKLYYREEAVAEDVLNVDAWQDGAVLQIGDVKYKVERNPPAFTELQLPRYIMAGFPVCPKLGVEFGDPTGSLFRWYKETKPRAAEPEGGGPSSSSPSSPSPGWTETGVDERVYTPSNADIGLRLKLHCTPGNGQRFGPSRELESVCPVEAGPGTCTFDHRHLYTKKVTDDALIRTVSYNILADTYAQTEFSRTVLYPYCAPYALELDYRQNLIQKELTGYNADLICLQEVDRCVFTDSLMPALEAFGLEGVFRIKQHEGLATFYRKSKFSLLSQHDIAFHEALQSDPLHKELLEKLALYPSAQERVLQRSSVVQVSVLQSTKDSSKKICVANTHLYWHPKGGYIRLIQMAVALAHIRHVSCDLYPGIPVIFCGDFNSTPSTGMYHFVINGSIAEDHEDWTSNGEEERCNMSLSHFFKLKSACGEPAYTNYVGGFHGCLDYIFIDLHALEVEQVIPLPSHEEVTTHQALPSVSHPSDHIALVCDLKWK</sequence>
<name>PDE12_BOVIN</name>
<accession>Q08DF7</accession>
<feature type="transit peptide" description="Mitochondrion" evidence="1">
    <location>
        <begin position="1"/>
        <end position="16"/>
    </location>
</feature>
<feature type="chain" id="PRO_0000324311" description="2',5'-phosphodiesterase 12">
    <location>
        <begin position="17"/>
        <end position="609"/>
    </location>
</feature>
<feature type="region of interest" description="Disordered" evidence="4">
    <location>
        <begin position="203"/>
        <end position="231"/>
    </location>
</feature>
<feature type="compositionally biased region" description="Low complexity" evidence="4">
    <location>
        <begin position="214"/>
        <end position="224"/>
    </location>
</feature>
<feature type="active site" description="Proton donor/acceptor" evidence="3">
    <location>
        <position position="496"/>
    </location>
</feature>
<feature type="binding site" evidence="2">
    <location>
        <position position="351"/>
    </location>
    <ligand>
        <name>Mg(2+)</name>
        <dbReference type="ChEBI" id="CHEBI:18420"/>
        <label>1</label>
    </ligand>
</feature>
<feature type="binding site" evidence="2">
    <location>
        <position position="496"/>
    </location>
    <ligand>
        <name>Mg(2+)</name>
        <dbReference type="ChEBI" id="CHEBI:18420"/>
        <label>2</label>
    </ligand>
</feature>
<feature type="binding site" evidence="2">
    <location>
        <position position="498"/>
    </location>
    <ligand>
        <name>Mg(2+)</name>
        <dbReference type="ChEBI" id="CHEBI:18420"/>
        <label>2</label>
    </ligand>
</feature>
<feature type="modified residue" description="Phosphoserine" evidence="2">
    <location>
        <position position="217"/>
    </location>
</feature>
<keyword id="KW-0269">Exonuclease</keyword>
<keyword id="KW-0378">Hydrolase</keyword>
<keyword id="KW-0460">Magnesium</keyword>
<keyword id="KW-0479">Metal-binding</keyword>
<keyword id="KW-0496">Mitochondrion</keyword>
<keyword id="KW-0507">mRNA processing</keyword>
<keyword id="KW-0540">Nuclease</keyword>
<keyword id="KW-0597">Phosphoprotein</keyword>
<keyword id="KW-1185">Reference proteome</keyword>
<keyword id="KW-0809">Transit peptide</keyword>
<evidence type="ECO:0000250" key="1"/>
<evidence type="ECO:0000250" key="2">
    <source>
        <dbReference type="UniProtKB" id="Q6L8Q7"/>
    </source>
</evidence>
<evidence type="ECO:0000250" key="3">
    <source>
        <dbReference type="UniProtKB" id="Q96LI5"/>
    </source>
</evidence>
<evidence type="ECO:0000256" key="4">
    <source>
        <dbReference type="SAM" id="MobiDB-lite"/>
    </source>
</evidence>
<evidence type="ECO:0000269" key="5">
    <source>
    </source>
</evidence>
<evidence type="ECO:0000305" key="6"/>
<proteinExistence type="evidence at protein level"/>